<gene>
    <name evidence="1" type="primary">ndhH</name>
</gene>
<feature type="chain" id="PRO_0000357978" description="NAD(P)H-quinone oxidoreductase subunit H, chloroplastic">
    <location>
        <begin position="1"/>
        <end position="395"/>
    </location>
</feature>
<evidence type="ECO:0000255" key="1">
    <source>
        <dbReference type="HAMAP-Rule" id="MF_01358"/>
    </source>
</evidence>
<keyword id="KW-0150">Chloroplast</keyword>
<keyword id="KW-0472">Membrane</keyword>
<keyword id="KW-0520">NAD</keyword>
<keyword id="KW-0521">NADP</keyword>
<keyword id="KW-0934">Plastid</keyword>
<keyword id="KW-0618">Plastoquinone</keyword>
<keyword id="KW-0874">Quinone</keyword>
<keyword id="KW-0793">Thylakoid</keyword>
<keyword id="KW-1278">Translocase</keyword>
<keyword id="KW-0813">Transport</keyword>
<reference key="1">
    <citation type="journal article" date="2006" name="BMC Plant Biol.">
        <title>The complete chloroplast genome sequence of Citrus sinensis (L.) Osbeck var 'Ridge Pineapple': organization and phylogenetic relationships to other angiosperms.</title>
        <authorList>
            <person name="Bausher M.G."/>
            <person name="Singh N.D."/>
            <person name="Lee S.-B."/>
            <person name="Jansen R.K."/>
            <person name="Daniell H."/>
        </authorList>
    </citation>
    <scope>NUCLEOTIDE SEQUENCE [LARGE SCALE GENOMIC DNA]</scope>
    <source>
        <strain>cv. Osbeck var. Ridge Pineapple</strain>
    </source>
</reference>
<protein>
    <recommendedName>
        <fullName evidence="1">NAD(P)H-quinone oxidoreductase subunit H, chloroplastic</fullName>
        <ecNumber evidence="1">7.1.1.-</ecNumber>
    </recommendedName>
    <alternativeName>
        <fullName>NAD(P)H dehydrogenase subunit H</fullName>
    </alternativeName>
    <alternativeName>
        <fullName evidence="1">NADH-plastoquinone oxidoreductase 49 kDa subunit</fullName>
    </alternativeName>
    <alternativeName>
        <fullName evidence="1">NADH-plastoquinone oxidoreductase subunit H</fullName>
    </alternativeName>
</protein>
<name>NDHH_CITSI</name>
<dbReference type="EC" id="7.1.1.-" evidence="1"/>
<dbReference type="EMBL" id="DQ864733">
    <property type="protein sequence ID" value="ABI49077.1"/>
    <property type="molecule type" value="Genomic_DNA"/>
</dbReference>
<dbReference type="RefSeq" id="YP_740533.1">
    <property type="nucleotide sequence ID" value="NC_008334.1"/>
</dbReference>
<dbReference type="SMR" id="Q09MC0"/>
<dbReference type="PaxDb" id="2711-XP_006473039.1"/>
<dbReference type="GeneID" id="4271145"/>
<dbReference type="KEGG" id="cit:4271145"/>
<dbReference type="eggNOG" id="KOG2870">
    <property type="taxonomic scope" value="Eukaryota"/>
</dbReference>
<dbReference type="OrthoDB" id="457846at71240"/>
<dbReference type="GO" id="GO:0009535">
    <property type="term" value="C:chloroplast thylakoid membrane"/>
    <property type="evidence" value="ECO:0007669"/>
    <property type="project" value="UniProtKB-SubCell"/>
</dbReference>
<dbReference type="GO" id="GO:0051287">
    <property type="term" value="F:NAD binding"/>
    <property type="evidence" value="ECO:0007669"/>
    <property type="project" value="InterPro"/>
</dbReference>
<dbReference type="GO" id="GO:0016655">
    <property type="term" value="F:oxidoreductase activity, acting on NAD(P)H, quinone or similar compound as acceptor"/>
    <property type="evidence" value="ECO:0007669"/>
    <property type="project" value="UniProtKB-UniRule"/>
</dbReference>
<dbReference type="GO" id="GO:0048038">
    <property type="term" value="F:quinone binding"/>
    <property type="evidence" value="ECO:0007669"/>
    <property type="project" value="UniProtKB-KW"/>
</dbReference>
<dbReference type="GO" id="GO:0019684">
    <property type="term" value="P:photosynthesis, light reaction"/>
    <property type="evidence" value="ECO:0007669"/>
    <property type="project" value="UniProtKB-UniRule"/>
</dbReference>
<dbReference type="FunFam" id="1.10.645.10:FF:000003">
    <property type="entry name" value="NAD(P)H-quinone oxidoreductase subunit H, chloroplastic"/>
    <property type="match status" value="1"/>
</dbReference>
<dbReference type="Gene3D" id="1.10.645.10">
    <property type="entry name" value="Cytochrome-c3 Hydrogenase, chain B"/>
    <property type="match status" value="1"/>
</dbReference>
<dbReference type="HAMAP" id="MF_01358">
    <property type="entry name" value="NDH1_NuoD"/>
    <property type="match status" value="1"/>
</dbReference>
<dbReference type="InterPro" id="IPR001135">
    <property type="entry name" value="NADH_Q_OxRdtase_suD"/>
</dbReference>
<dbReference type="InterPro" id="IPR014029">
    <property type="entry name" value="NADH_UbQ_OxRdtase_49kDa_CS"/>
</dbReference>
<dbReference type="InterPro" id="IPR022885">
    <property type="entry name" value="NDH1_su_D/H"/>
</dbReference>
<dbReference type="InterPro" id="IPR029014">
    <property type="entry name" value="NiFe-Hase_large"/>
</dbReference>
<dbReference type="NCBIfam" id="NF004739">
    <property type="entry name" value="PRK06075.1"/>
    <property type="match status" value="1"/>
</dbReference>
<dbReference type="NCBIfam" id="NF005649">
    <property type="entry name" value="PRK07415.1"/>
    <property type="match status" value="1"/>
</dbReference>
<dbReference type="PANTHER" id="PTHR11993:SF10">
    <property type="entry name" value="NADH DEHYDROGENASE [UBIQUINONE] IRON-SULFUR PROTEIN 2, MITOCHONDRIAL"/>
    <property type="match status" value="1"/>
</dbReference>
<dbReference type="PANTHER" id="PTHR11993">
    <property type="entry name" value="NADH-UBIQUINONE OXIDOREDUCTASE 49 KDA SUBUNIT"/>
    <property type="match status" value="1"/>
</dbReference>
<dbReference type="Pfam" id="PF00346">
    <property type="entry name" value="Complex1_49kDa"/>
    <property type="match status" value="1"/>
</dbReference>
<dbReference type="SUPFAM" id="SSF56762">
    <property type="entry name" value="HydB/Nqo4-like"/>
    <property type="match status" value="1"/>
</dbReference>
<dbReference type="PROSITE" id="PS00535">
    <property type="entry name" value="COMPLEX1_49K"/>
    <property type="match status" value="1"/>
</dbReference>
<proteinExistence type="inferred from homology"/>
<geneLocation type="chloroplast"/>
<accession>Q09MC0</accession>
<sequence length="395" mass="45579">MSILATEKEKEFMIVNMGPHHPSMHGVLRLIVTLDGEDVIDCEPILGYLHRGMEKIAENRTIIQYLPYVTRWDYLATMFTEAITVNGPEQLGNIRVPKRASYIRVIMLELSRIASHLLWLGPFMADIGAQTPFFYIFRERELVYDLFEAATGMRMMHNYFRIGGVAADLPYGWIDKCLDFCDYFLTGVAEYQKLITRNPIFLERVEGVGIIGGEEAINWGLSGPMLRASGIEWDLRKVDHYECYDEFDWEVQWQKEGDSLARYLVRIGEMTESVKIIQQALEGIPGGPYENLEIRCFDRESDPERNDFENRFISKKPSPTFELTKQELYARVEAPKGELGIFLIGDQSGFPWRWKIRPPGFINLQILPQLVKRMKLADIMTILGSIDIIMGEVDR</sequence>
<organism>
    <name type="scientific">Citrus sinensis</name>
    <name type="common">Sweet orange</name>
    <name type="synonym">Citrus aurantium var. sinensis</name>
    <dbReference type="NCBI Taxonomy" id="2711"/>
    <lineage>
        <taxon>Eukaryota</taxon>
        <taxon>Viridiplantae</taxon>
        <taxon>Streptophyta</taxon>
        <taxon>Embryophyta</taxon>
        <taxon>Tracheophyta</taxon>
        <taxon>Spermatophyta</taxon>
        <taxon>Magnoliopsida</taxon>
        <taxon>eudicotyledons</taxon>
        <taxon>Gunneridae</taxon>
        <taxon>Pentapetalae</taxon>
        <taxon>rosids</taxon>
        <taxon>malvids</taxon>
        <taxon>Sapindales</taxon>
        <taxon>Rutaceae</taxon>
        <taxon>Aurantioideae</taxon>
        <taxon>Citrus</taxon>
    </lineage>
</organism>
<comment type="function">
    <text evidence="1">NDH shuttles electrons from NAD(P)H:plastoquinone, via FMN and iron-sulfur (Fe-S) centers, to quinones in the photosynthetic chain and possibly in a chloroplast respiratory chain. The immediate electron acceptor for the enzyme in this species is believed to be plastoquinone. Couples the redox reaction to proton translocation, and thus conserves the redox energy in a proton gradient.</text>
</comment>
<comment type="catalytic activity">
    <reaction evidence="1">
        <text>a plastoquinone + NADH + (n+1) H(+)(in) = a plastoquinol + NAD(+) + n H(+)(out)</text>
        <dbReference type="Rhea" id="RHEA:42608"/>
        <dbReference type="Rhea" id="RHEA-COMP:9561"/>
        <dbReference type="Rhea" id="RHEA-COMP:9562"/>
        <dbReference type="ChEBI" id="CHEBI:15378"/>
        <dbReference type="ChEBI" id="CHEBI:17757"/>
        <dbReference type="ChEBI" id="CHEBI:57540"/>
        <dbReference type="ChEBI" id="CHEBI:57945"/>
        <dbReference type="ChEBI" id="CHEBI:62192"/>
    </reaction>
</comment>
<comment type="catalytic activity">
    <reaction evidence="1">
        <text>a plastoquinone + NADPH + (n+1) H(+)(in) = a plastoquinol + NADP(+) + n H(+)(out)</text>
        <dbReference type="Rhea" id="RHEA:42612"/>
        <dbReference type="Rhea" id="RHEA-COMP:9561"/>
        <dbReference type="Rhea" id="RHEA-COMP:9562"/>
        <dbReference type="ChEBI" id="CHEBI:15378"/>
        <dbReference type="ChEBI" id="CHEBI:17757"/>
        <dbReference type="ChEBI" id="CHEBI:57783"/>
        <dbReference type="ChEBI" id="CHEBI:58349"/>
        <dbReference type="ChEBI" id="CHEBI:62192"/>
    </reaction>
</comment>
<comment type="subunit">
    <text evidence="1">NDH is composed of at least 16 different subunits, 5 of which are encoded in the nucleus.</text>
</comment>
<comment type="subcellular location">
    <subcellularLocation>
        <location evidence="1">Plastid</location>
        <location evidence="1">Chloroplast thylakoid membrane</location>
        <topology evidence="1">Peripheral membrane protein</topology>
        <orientation evidence="1">Stromal side</orientation>
    </subcellularLocation>
</comment>
<comment type="similarity">
    <text evidence="1">Belongs to the complex I 49 kDa subunit family.</text>
</comment>